<keyword id="KW-0414">Isoprene biosynthesis</keyword>
<keyword id="KW-0548">Nucleotidyltransferase</keyword>
<keyword id="KW-1185">Reference proteome</keyword>
<keyword id="KW-0808">Transferase</keyword>
<proteinExistence type="inferred from homology"/>
<organism>
    <name type="scientific">Azoarcus sp. (strain BH72)</name>
    <dbReference type="NCBI Taxonomy" id="418699"/>
    <lineage>
        <taxon>Bacteria</taxon>
        <taxon>Pseudomonadati</taxon>
        <taxon>Pseudomonadota</taxon>
        <taxon>Betaproteobacteria</taxon>
        <taxon>Rhodocyclales</taxon>
        <taxon>Zoogloeaceae</taxon>
        <taxon>Azoarcus</taxon>
    </lineage>
</organism>
<sequence length="236" mass="25778">MQNFHPRHFAIVPAAGSGSRMGSERPKQYLPLLGKPLIYHTLSVLCAAPEIDKVFVVLSVGDAEWGRHDWRALGPKLVPLFCGGPTRADSVLAGLRAIAGEAVQSDWVLVHDAARPCLAPWHIDKLVRELAGDEVGGLLAVPVADTLKRADGHRHVAATVPRDSLWQAQTPQMFRYVMLRRALESATDVTDEASAIEAAGLRPRLVQGDATNLKVTYPLDLHLAEWILNNRTGVQQ</sequence>
<name>ISPD_AZOSB</name>
<comment type="function">
    <text evidence="1">Catalyzes the formation of 4-diphosphocytidyl-2-C-methyl-D-erythritol from CTP and 2-C-methyl-D-erythritol 4-phosphate (MEP).</text>
</comment>
<comment type="catalytic activity">
    <reaction evidence="1">
        <text>2-C-methyl-D-erythritol 4-phosphate + CTP + H(+) = 4-CDP-2-C-methyl-D-erythritol + diphosphate</text>
        <dbReference type="Rhea" id="RHEA:13429"/>
        <dbReference type="ChEBI" id="CHEBI:15378"/>
        <dbReference type="ChEBI" id="CHEBI:33019"/>
        <dbReference type="ChEBI" id="CHEBI:37563"/>
        <dbReference type="ChEBI" id="CHEBI:57823"/>
        <dbReference type="ChEBI" id="CHEBI:58262"/>
        <dbReference type="EC" id="2.7.7.60"/>
    </reaction>
</comment>
<comment type="pathway">
    <text evidence="1">Isoprenoid biosynthesis; isopentenyl diphosphate biosynthesis via DXP pathway; isopentenyl diphosphate from 1-deoxy-D-xylulose 5-phosphate: step 2/6.</text>
</comment>
<comment type="similarity">
    <text evidence="1">Belongs to the IspD/TarI cytidylyltransferase family. IspD subfamily.</text>
</comment>
<evidence type="ECO:0000255" key="1">
    <source>
        <dbReference type="HAMAP-Rule" id="MF_00108"/>
    </source>
</evidence>
<dbReference type="EC" id="2.7.7.60" evidence="1"/>
<dbReference type="EMBL" id="AM406670">
    <property type="protein sequence ID" value="CAL94299.1"/>
    <property type="molecule type" value="Genomic_DNA"/>
</dbReference>
<dbReference type="RefSeq" id="WP_011765415.1">
    <property type="nucleotide sequence ID" value="NC_008702.1"/>
</dbReference>
<dbReference type="SMR" id="A1K644"/>
<dbReference type="STRING" id="62928.azo1682"/>
<dbReference type="KEGG" id="azo:azo1682"/>
<dbReference type="eggNOG" id="COG1211">
    <property type="taxonomic scope" value="Bacteria"/>
</dbReference>
<dbReference type="HOGENOM" id="CLU_061281_3_0_4"/>
<dbReference type="UniPathway" id="UPA00056">
    <property type="reaction ID" value="UER00093"/>
</dbReference>
<dbReference type="Proteomes" id="UP000002588">
    <property type="component" value="Chromosome"/>
</dbReference>
<dbReference type="GO" id="GO:0050518">
    <property type="term" value="F:2-C-methyl-D-erythritol 4-phosphate cytidylyltransferase activity"/>
    <property type="evidence" value="ECO:0007669"/>
    <property type="project" value="UniProtKB-UniRule"/>
</dbReference>
<dbReference type="GO" id="GO:0019288">
    <property type="term" value="P:isopentenyl diphosphate biosynthetic process, methylerythritol 4-phosphate pathway"/>
    <property type="evidence" value="ECO:0007669"/>
    <property type="project" value="UniProtKB-UniRule"/>
</dbReference>
<dbReference type="CDD" id="cd02516">
    <property type="entry name" value="CDP-ME_synthetase"/>
    <property type="match status" value="1"/>
</dbReference>
<dbReference type="FunFam" id="3.90.550.10:FF:000003">
    <property type="entry name" value="2-C-methyl-D-erythritol 4-phosphate cytidylyltransferase"/>
    <property type="match status" value="1"/>
</dbReference>
<dbReference type="Gene3D" id="3.90.550.10">
    <property type="entry name" value="Spore Coat Polysaccharide Biosynthesis Protein SpsA, Chain A"/>
    <property type="match status" value="1"/>
</dbReference>
<dbReference type="HAMAP" id="MF_00108">
    <property type="entry name" value="IspD"/>
    <property type="match status" value="1"/>
</dbReference>
<dbReference type="InterPro" id="IPR001228">
    <property type="entry name" value="IspD"/>
</dbReference>
<dbReference type="InterPro" id="IPR034683">
    <property type="entry name" value="IspD/TarI"/>
</dbReference>
<dbReference type="InterPro" id="IPR050088">
    <property type="entry name" value="IspD/TarI_cytidylyltransf_bact"/>
</dbReference>
<dbReference type="InterPro" id="IPR018294">
    <property type="entry name" value="ISPD_synthase_CS"/>
</dbReference>
<dbReference type="InterPro" id="IPR029044">
    <property type="entry name" value="Nucleotide-diphossugar_trans"/>
</dbReference>
<dbReference type="NCBIfam" id="TIGR00453">
    <property type="entry name" value="ispD"/>
    <property type="match status" value="1"/>
</dbReference>
<dbReference type="PANTHER" id="PTHR32125">
    <property type="entry name" value="2-C-METHYL-D-ERYTHRITOL 4-PHOSPHATE CYTIDYLYLTRANSFERASE, CHLOROPLASTIC"/>
    <property type="match status" value="1"/>
</dbReference>
<dbReference type="PANTHER" id="PTHR32125:SF4">
    <property type="entry name" value="2-C-METHYL-D-ERYTHRITOL 4-PHOSPHATE CYTIDYLYLTRANSFERASE, CHLOROPLASTIC"/>
    <property type="match status" value="1"/>
</dbReference>
<dbReference type="Pfam" id="PF01128">
    <property type="entry name" value="IspD"/>
    <property type="match status" value="1"/>
</dbReference>
<dbReference type="SUPFAM" id="SSF53448">
    <property type="entry name" value="Nucleotide-diphospho-sugar transferases"/>
    <property type="match status" value="1"/>
</dbReference>
<dbReference type="PROSITE" id="PS01295">
    <property type="entry name" value="ISPD"/>
    <property type="match status" value="1"/>
</dbReference>
<reference key="1">
    <citation type="journal article" date="2006" name="Nat. Biotechnol.">
        <title>Complete genome of the mutualistic, N2-fixing grass endophyte Azoarcus sp. strain BH72.</title>
        <authorList>
            <person name="Krause A."/>
            <person name="Ramakumar A."/>
            <person name="Bartels D."/>
            <person name="Battistoni F."/>
            <person name="Bekel T."/>
            <person name="Boch J."/>
            <person name="Boehm M."/>
            <person name="Friedrich F."/>
            <person name="Hurek T."/>
            <person name="Krause L."/>
            <person name="Linke B."/>
            <person name="McHardy A.C."/>
            <person name="Sarkar A."/>
            <person name="Schneiker S."/>
            <person name="Syed A.A."/>
            <person name="Thauer R."/>
            <person name="Vorhoelter F.-J."/>
            <person name="Weidner S."/>
            <person name="Puehler A."/>
            <person name="Reinhold-Hurek B."/>
            <person name="Kaiser O."/>
            <person name="Goesmann A."/>
        </authorList>
    </citation>
    <scope>NUCLEOTIDE SEQUENCE [LARGE SCALE GENOMIC DNA]</scope>
    <source>
        <strain>BH72</strain>
    </source>
</reference>
<feature type="chain" id="PRO_1000022896" description="2-C-methyl-D-erythritol 4-phosphate cytidylyltransferase">
    <location>
        <begin position="1"/>
        <end position="236"/>
    </location>
</feature>
<feature type="site" description="Transition state stabilizer" evidence="1">
    <location>
        <position position="20"/>
    </location>
</feature>
<feature type="site" description="Transition state stabilizer" evidence="1">
    <location>
        <position position="27"/>
    </location>
</feature>
<feature type="site" description="Positions MEP for the nucleophilic attack" evidence="1">
    <location>
        <position position="162"/>
    </location>
</feature>
<feature type="site" description="Positions MEP for the nucleophilic attack" evidence="1">
    <location>
        <position position="214"/>
    </location>
</feature>
<protein>
    <recommendedName>
        <fullName evidence="1">2-C-methyl-D-erythritol 4-phosphate cytidylyltransferase</fullName>
        <ecNumber evidence="1">2.7.7.60</ecNumber>
    </recommendedName>
    <alternativeName>
        <fullName evidence="1">4-diphosphocytidyl-2C-methyl-D-erythritol synthase</fullName>
    </alternativeName>
    <alternativeName>
        <fullName evidence="1">MEP cytidylyltransferase</fullName>
        <shortName evidence="1">MCT</shortName>
    </alternativeName>
</protein>
<gene>
    <name evidence="1" type="primary">ispD</name>
    <name type="ordered locus">azo1682</name>
</gene>
<accession>A1K644</accession>